<name>URE3_BURMS</name>
<keyword id="KW-0963">Cytoplasm</keyword>
<keyword id="KW-0378">Hydrolase</keyword>
<comment type="catalytic activity">
    <reaction evidence="1">
        <text>urea + 2 H2O + H(+) = hydrogencarbonate + 2 NH4(+)</text>
        <dbReference type="Rhea" id="RHEA:20557"/>
        <dbReference type="ChEBI" id="CHEBI:15377"/>
        <dbReference type="ChEBI" id="CHEBI:15378"/>
        <dbReference type="ChEBI" id="CHEBI:16199"/>
        <dbReference type="ChEBI" id="CHEBI:17544"/>
        <dbReference type="ChEBI" id="CHEBI:28938"/>
        <dbReference type="EC" id="3.5.1.5"/>
    </reaction>
</comment>
<comment type="pathway">
    <text evidence="1">Nitrogen metabolism; urea degradation; CO(2) and NH(3) from urea (urease route): step 1/1.</text>
</comment>
<comment type="subunit">
    <text evidence="1">Heterotrimer of UreA (gamma), UreB (beta) and UreC (alpha) subunits. Three heterotrimers associate to form the active enzyme.</text>
</comment>
<comment type="subcellular location">
    <subcellularLocation>
        <location evidence="1">Cytoplasm</location>
    </subcellularLocation>
</comment>
<comment type="similarity">
    <text evidence="1">Belongs to the urease gamma subunit family.</text>
</comment>
<proteinExistence type="inferred from homology"/>
<dbReference type="EC" id="3.5.1.5" evidence="1"/>
<dbReference type="EMBL" id="CP000526">
    <property type="protein sequence ID" value="ABM49778.1"/>
    <property type="molecule type" value="Genomic_DNA"/>
</dbReference>
<dbReference type="RefSeq" id="WP_004186513.1">
    <property type="nucleotide sequence ID" value="NC_008785.1"/>
</dbReference>
<dbReference type="SMR" id="A1V1G8"/>
<dbReference type="GeneID" id="93061237"/>
<dbReference type="KEGG" id="bmv:BMASAVP1_A0725"/>
<dbReference type="HOGENOM" id="CLU_145825_1_0_4"/>
<dbReference type="UniPathway" id="UPA00258">
    <property type="reaction ID" value="UER00370"/>
</dbReference>
<dbReference type="GO" id="GO:0005737">
    <property type="term" value="C:cytoplasm"/>
    <property type="evidence" value="ECO:0007669"/>
    <property type="project" value="UniProtKB-SubCell"/>
</dbReference>
<dbReference type="GO" id="GO:0016151">
    <property type="term" value="F:nickel cation binding"/>
    <property type="evidence" value="ECO:0007669"/>
    <property type="project" value="InterPro"/>
</dbReference>
<dbReference type="GO" id="GO:0009039">
    <property type="term" value="F:urease activity"/>
    <property type="evidence" value="ECO:0007669"/>
    <property type="project" value="UniProtKB-UniRule"/>
</dbReference>
<dbReference type="GO" id="GO:0043419">
    <property type="term" value="P:urea catabolic process"/>
    <property type="evidence" value="ECO:0007669"/>
    <property type="project" value="UniProtKB-UniRule"/>
</dbReference>
<dbReference type="CDD" id="cd00390">
    <property type="entry name" value="Urease_gamma"/>
    <property type="match status" value="1"/>
</dbReference>
<dbReference type="Gene3D" id="3.30.280.10">
    <property type="entry name" value="Urease, gamma-like subunit"/>
    <property type="match status" value="1"/>
</dbReference>
<dbReference type="HAMAP" id="MF_00739">
    <property type="entry name" value="Urease_gamma"/>
    <property type="match status" value="1"/>
</dbReference>
<dbReference type="InterPro" id="IPR012010">
    <property type="entry name" value="Urease_gamma"/>
</dbReference>
<dbReference type="InterPro" id="IPR002026">
    <property type="entry name" value="Urease_gamma/gamma-beta_su"/>
</dbReference>
<dbReference type="InterPro" id="IPR036463">
    <property type="entry name" value="Urease_gamma_sf"/>
</dbReference>
<dbReference type="InterPro" id="IPR050069">
    <property type="entry name" value="Urease_subunit"/>
</dbReference>
<dbReference type="NCBIfam" id="NF009712">
    <property type="entry name" value="PRK13241.1"/>
    <property type="match status" value="1"/>
</dbReference>
<dbReference type="NCBIfam" id="TIGR00193">
    <property type="entry name" value="urease_gam"/>
    <property type="match status" value="1"/>
</dbReference>
<dbReference type="PANTHER" id="PTHR33569">
    <property type="entry name" value="UREASE"/>
    <property type="match status" value="1"/>
</dbReference>
<dbReference type="PANTHER" id="PTHR33569:SF1">
    <property type="entry name" value="UREASE"/>
    <property type="match status" value="1"/>
</dbReference>
<dbReference type="Pfam" id="PF00547">
    <property type="entry name" value="Urease_gamma"/>
    <property type="match status" value="1"/>
</dbReference>
<dbReference type="PIRSF" id="PIRSF001223">
    <property type="entry name" value="Urease_gamma"/>
    <property type="match status" value="1"/>
</dbReference>
<dbReference type="SUPFAM" id="SSF54111">
    <property type="entry name" value="Urease, gamma-subunit"/>
    <property type="match status" value="1"/>
</dbReference>
<protein>
    <recommendedName>
        <fullName evidence="1">Urease subunit gamma</fullName>
        <ecNumber evidence="1">3.5.1.5</ecNumber>
    </recommendedName>
    <alternativeName>
        <fullName evidence="1">Urea amidohydrolase subunit gamma</fullName>
    </alternativeName>
</protein>
<feature type="chain" id="PRO_1000046317" description="Urease subunit gamma">
    <location>
        <begin position="1"/>
        <end position="100"/>
    </location>
</feature>
<accession>A1V1G8</accession>
<evidence type="ECO:0000255" key="1">
    <source>
        <dbReference type="HAMAP-Rule" id="MF_00739"/>
    </source>
</evidence>
<reference key="1">
    <citation type="journal article" date="2010" name="Genome Biol. Evol.">
        <title>Continuing evolution of Burkholderia mallei through genome reduction and large-scale rearrangements.</title>
        <authorList>
            <person name="Losada L."/>
            <person name="Ronning C.M."/>
            <person name="DeShazer D."/>
            <person name="Woods D."/>
            <person name="Fedorova N."/>
            <person name="Kim H.S."/>
            <person name="Shabalina S.A."/>
            <person name="Pearson T.R."/>
            <person name="Brinkac L."/>
            <person name="Tan P."/>
            <person name="Nandi T."/>
            <person name="Crabtree J."/>
            <person name="Badger J."/>
            <person name="Beckstrom-Sternberg S."/>
            <person name="Saqib M."/>
            <person name="Schutzer S.E."/>
            <person name="Keim P."/>
            <person name="Nierman W.C."/>
        </authorList>
    </citation>
    <scope>NUCLEOTIDE SEQUENCE [LARGE SCALE GENOMIC DNA]</scope>
    <source>
        <strain>SAVP1</strain>
    </source>
</reference>
<sequence length="100" mass="11172">MKLTPREKDKLLIFTAALLAERRRARGLKLNYPETVAFITAALMEAARDGRTVAEVMHYGTTLLTRDDVMEGVPEMIPDIQVEATFPDGTKLVTVHHPIP</sequence>
<organism>
    <name type="scientific">Burkholderia mallei (strain SAVP1)</name>
    <dbReference type="NCBI Taxonomy" id="320388"/>
    <lineage>
        <taxon>Bacteria</taxon>
        <taxon>Pseudomonadati</taxon>
        <taxon>Pseudomonadota</taxon>
        <taxon>Betaproteobacteria</taxon>
        <taxon>Burkholderiales</taxon>
        <taxon>Burkholderiaceae</taxon>
        <taxon>Burkholderia</taxon>
        <taxon>pseudomallei group</taxon>
    </lineage>
</organism>
<gene>
    <name evidence="1" type="primary">ureA</name>
    <name type="ordered locus">BMASAVP1_A0725</name>
</gene>